<sequence length="348" mass="39148">MKKTDELRTIRIDPLITPSELAKKYAITSEIMDNVIITRQNIARIMTGEDLRLLVVIGPCSVHDPIAAVEYAHRLYELRKKYQDRLEIIMRTYFEKPRTVVGWKGLISDPDLNGSFRVNHGLAVARKLLLDINELGMPAATEFLDMVIGQFIADLISWGAIGARTTESQIHREMASALSCPVGFKNGTDGNIRIAIDAIRAAQARHLFFAPNKDGQMTINHTSGNPYGHIIMRGGRTPNYHAHDINSAIEHLREFNLLEHLMIDFSHGNCLKEHIRQKDVAKSVSKQISQGSKTIFGVMIESFLEEGFQTVKENQPLIYGKSITDACLNWKDSVLIIKQLADAVDTRF</sequence>
<organism>
    <name type="scientific">Buchnera aphidicola subsp. Schizaphis graminum (strain Sg)</name>
    <dbReference type="NCBI Taxonomy" id="198804"/>
    <lineage>
        <taxon>Bacteria</taxon>
        <taxon>Pseudomonadati</taxon>
        <taxon>Pseudomonadota</taxon>
        <taxon>Gammaproteobacteria</taxon>
        <taxon>Enterobacterales</taxon>
        <taxon>Erwiniaceae</taxon>
        <taxon>Buchnera</taxon>
    </lineage>
</organism>
<feature type="chain" id="PRO_0000140838" description="Phospho-2-dehydro-3-deoxyheptonate aldolase, Trp-sensitive">
    <location>
        <begin position="1"/>
        <end position="348"/>
    </location>
</feature>
<feature type="sequence conflict" description="In Ref. 1; AAC43604." evidence="1" ref="1">
    <original>MPAATE</original>
    <variation>CLQQQS</variation>
    <location>
        <begin position="137"/>
        <end position="142"/>
    </location>
</feature>
<comment type="function">
    <text>Stereospecific condensation of phosphoenolpyruvate (PEP) and D-erythrose-4-phosphate (E4P) giving rise to 3-deoxy-D-arabino-heptulosonate-7-phosphate (DAHP).</text>
</comment>
<comment type="catalytic activity">
    <reaction>
        <text>D-erythrose 4-phosphate + phosphoenolpyruvate + H2O = 7-phospho-2-dehydro-3-deoxy-D-arabino-heptonate + phosphate</text>
        <dbReference type="Rhea" id="RHEA:14717"/>
        <dbReference type="ChEBI" id="CHEBI:15377"/>
        <dbReference type="ChEBI" id="CHEBI:16897"/>
        <dbReference type="ChEBI" id="CHEBI:43474"/>
        <dbReference type="ChEBI" id="CHEBI:58394"/>
        <dbReference type="ChEBI" id="CHEBI:58702"/>
        <dbReference type="EC" id="2.5.1.54"/>
    </reaction>
</comment>
<comment type="pathway">
    <text>Metabolic intermediate biosynthesis; chorismate biosynthesis; chorismate from D-erythrose 4-phosphate and phosphoenolpyruvate: step 1/7.</text>
</comment>
<comment type="similarity">
    <text evidence="1">Belongs to the class-I DAHP synthase family.</text>
</comment>
<name>AROH_BUCAP</name>
<gene>
    <name type="primary">aroH</name>
    <name type="ordered locus">BUsg_116</name>
</gene>
<keyword id="KW-0028">Amino-acid biosynthesis</keyword>
<keyword id="KW-0057">Aromatic amino acid biosynthesis</keyword>
<keyword id="KW-0808">Transferase</keyword>
<evidence type="ECO:0000305" key="1"/>
<reference key="1">
    <citation type="journal article" date="1995" name="Curr. Microbiol.">
        <title>Aromatic amino acid biosynthesis in Buchnera aphidicola (endosymbiont of aphids): cloning and sequencing of a DNA fragment containing aroH-thrS-infC-rpmI-rplT.</title>
        <authorList>
            <person name="Kolibachuk D."/>
            <person name="Rouhbakhsh D."/>
            <person name="Baumann P."/>
        </authorList>
    </citation>
    <scope>NUCLEOTIDE SEQUENCE [GENOMIC DNA]</scope>
</reference>
<reference key="2">
    <citation type="journal article" date="2002" name="Science">
        <title>50 million years of genomic stasis in endosymbiotic bacteria.</title>
        <authorList>
            <person name="Tamas I."/>
            <person name="Klasson L."/>
            <person name="Canbaeck B."/>
            <person name="Naeslund A.K."/>
            <person name="Eriksson A.-S."/>
            <person name="Wernegreen J.J."/>
            <person name="Sandstroem J.P."/>
            <person name="Moran N.A."/>
            <person name="Andersson S.G.E."/>
        </authorList>
    </citation>
    <scope>NUCLEOTIDE SEQUENCE [LARGE SCALE GENOMIC DNA]</scope>
    <source>
        <strain>Sg</strain>
    </source>
</reference>
<dbReference type="EC" id="2.5.1.54"/>
<dbReference type="EMBL" id="U11066">
    <property type="protein sequence ID" value="AAC43604.1"/>
    <property type="molecule type" value="Genomic_DNA"/>
</dbReference>
<dbReference type="EMBL" id="AE013218">
    <property type="protein sequence ID" value="AAM67685.1"/>
    <property type="molecule type" value="Genomic_DNA"/>
</dbReference>
<dbReference type="PIR" id="I40070">
    <property type="entry name" value="I40070"/>
</dbReference>
<dbReference type="RefSeq" id="WP_011053651.1">
    <property type="nucleotide sequence ID" value="NC_004061.1"/>
</dbReference>
<dbReference type="SMR" id="P46245"/>
<dbReference type="STRING" id="198804.BUsg_116"/>
<dbReference type="GeneID" id="93003586"/>
<dbReference type="KEGG" id="bas:BUsg_116"/>
<dbReference type="eggNOG" id="COG0722">
    <property type="taxonomic scope" value="Bacteria"/>
</dbReference>
<dbReference type="HOGENOM" id="CLU_030903_0_1_6"/>
<dbReference type="UniPathway" id="UPA00053">
    <property type="reaction ID" value="UER00084"/>
</dbReference>
<dbReference type="Proteomes" id="UP000000416">
    <property type="component" value="Chromosome"/>
</dbReference>
<dbReference type="GO" id="GO:0005737">
    <property type="term" value="C:cytoplasm"/>
    <property type="evidence" value="ECO:0007669"/>
    <property type="project" value="TreeGrafter"/>
</dbReference>
<dbReference type="GO" id="GO:0003849">
    <property type="term" value="F:3-deoxy-7-phosphoheptulonate synthase activity"/>
    <property type="evidence" value="ECO:0007669"/>
    <property type="project" value="UniProtKB-EC"/>
</dbReference>
<dbReference type="GO" id="GO:0008652">
    <property type="term" value="P:amino acid biosynthetic process"/>
    <property type="evidence" value="ECO:0007669"/>
    <property type="project" value="UniProtKB-KW"/>
</dbReference>
<dbReference type="GO" id="GO:0009073">
    <property type="term" value="P:aromatic amino acid family biosynthetic process"/>
    <property type="evidence" value="ECO:0007669"/>
    <property type="project" value="UniProtKB-KW"/>
</dbReference>
<dbReference type="GO" id="GO:0009423">
    <property type="term" value="P:chorismate biosynthetic process"/>
    <property type="evidence" value="ECO:0007669"/>
    <property type="project" value="UniProtKB-UniPathway"/>
</dbReference>
<dbReference type="FunFam" id="3.20.20.70:FF:000005">
    <property type="entry name" value="Phospho-2-dehydro-3-deoxyheptonate aldolase"/>
    <property type="match status" value="1"/>
</dbReference>
<dbReference type="Gene3D" id="3.20.20.70">
    <property type="entry name" value="Aldolase class I"/>
    <property type="match status" value="1"/>
</dbReference>
<dbReference type="InterPro" id="IPR013785">
    <property type="entry name" value="Aldolase_TIM"/>
</dbReference>
<dbReference type="InterPro" id="IPR006218">
    <property type="entry name" value="DAHP1/KDSA"/>
</dbReference>
<dbReference type="InterPro" id="IPR006219">
    <property type="entry name" value="DAHP_synth_1"/>
</dbReference>
<dbReference type="NCBIfam" id="TIGR00034">
    <property type="entry name" value="aroFGH"/>
    <property type="match status" value="1"/>
</dbReference>
<dbReference type="NCBIfam" id="NF009395">
    <property type="entry name" value="PRK12755.1"/>
    <property type="match status" value="1"/>
</dbReference>
<dbReference type="NCBIfam" id="NF009396">
    <property type="entry name" value="PRK12756.1"/>
    <property type="match status" value="1"/>
</dbReference>
<dbReference type="PANTHER" id="PTHR21225">
    <property type="entry name" value="PHOSPHO-2-DEHYDRO-3-DEOXYHEPTONATE ALDOLASE DAHP SYNTHETASE"/>
    <property type="match status" value="1"/>
</dbReference>
<dbReference type="PANTHER" id="PTHR21225:SF6">
    <property type="entry name" value="PHOSPHO-2-DEHYDRO-3-DEOXYHEPTONATE ALDOLASE, TRP-SENSITIVE"/>
    <property type="match status" value="1"/>
</dbReference>
<dbReference type="Pfam" id="PF00793">
    <property type="entry name" value="DAHP_synth_1"/>
    <property type="match status" value="1"/>
</dbReference>
<dbReference type="PIRSF" id="PIRSF001361">
    <property type="entry name" value="DAHP_synthase"/>
    <property type="match status" value="1"/>
</dbReference>
<dbReference type="SUPFAM" id="SSF51569">
    <property type="entry name" value="Aldolase"/>
    <property type="match status" value="1"/>
</dbReference>
<accession>P46245</accession>
<proteinExistence type="inferred from homology"/>
<protein>
    <recommendedName>
        <fullName>Phospho-2-dehydro-3-deoxyheptonate aldolase, Trp-sensitive</fullName>
        <ecNumber>2.5.1.54</ecNumber>
    </recommendedName>
    <alternativeName>
        <fullName>3-deoxy-D-arabino-heptulosonate 7-phosphate synthase</fullName>
    </alternativeName>
    <alternativeName>
        <fullName>DAHP synthase</fullName>
    </alternativeName>
    <alternativeName>
        <fullName>Phospho-2-keto-3-deoxyheptonate aldolase</fullName>
    </alternativeName>
</protein>